<protein>
    <recommendedName>
        <fullName evidence="1">Phosphoribosylformylglycinamidine synthase subunit PurQ</fullName>
        <shortName evidence="1">FGAM synthase</shortName>
        <ecNumber evidence="1">6.3.5.3</ecNumber>
    </recommendedName>
    <alternativeName>
        <fullName evidence="1">Formylglycinamide ribonucleotide amidotransferase subunit I</fullName>
        <shortName evidence="1">FGAR amidotransferase I</shortName>
        <shortName evidence="1">FGAR-AT I</shortName>
    </alternativeName>
    <alternativeName>
        <fullName evidence="1">Glutaminase PurQ</fullName>
        <ecNumber evidence="1">3.5.1.2</ecNumber>
    </alternativeName>
    <alternativeName>
        <fullName evidence="1">Phosphoribosylformylglycinamidine synthase subunit I</fullName>
    </alternativeName>
</protein>
<feature type="chain" id="PRO_0000252730" description="Phosphoribosylformylglycinamidine synthase subunit PurQ">
    <location>
        <begin position="1"/>
        <end position="222"/>
    </location>
</feature>
<feature type="domain" description="Glutamine amidotransferase type-1" evidence="1">
    <location>
        <begin position="3"/>
        <end position="222"/>
    </location>
</feature>
<feature type="active site" description="Nucleophile" evidence="1">
    <location>
        <position position="86"/>
    </location>
</feature>
<feature type="active site" evidence="1">
    <location>
        <position position="194"/>
    </location>
</feature>
<feature type="active site" evidence="1">
    <location>
        <position position="196"/>
    </location>
</feature>
<organism>
    <name type="scientific">Ruegeria sp. (strain TM1040)</name>
    <name type="common">Silicibacter sp.</name>
    <dbReference type="NCBI Taxonomy" id="292414"/>
    <lineage>
        <taxon>Bacteria</taxon>
        <taxon>Pseudomonadati</taxon>
        <taxon>Pseudomonadota</taxon>
        <taxon>Alphaproteobacteria</taxon>
        <taxon>Rhodobacterales</taxon>
        <taxon>Roseobacteraceae</taxon>
        <taxon>Ruegeria</taxon>
    </lineage>
</organism>
<reference key="1">
    <citation type="submission" date="2006-05" db="EMBL/GenBank/DDBJ databases">
        <title>Complete sequence of chromosome of Silicibacter sp. TM1040.</title>
        <authorList>
            <consortium name="US DOE Joint Genome Institute"/>
            <person name="Copeland A."/>
            <person name="Lucas S."/>
            <person name="Lapidus A."/>
            <person name="Barry K."/>
            <person name="Detter J.C."/>
            <person name="Glavina del Rio T."/>
            <person name="Hammon N."/>
            <person name="Israni S."/>
            <person name="Dalin E."/>
            <person name="Tice H."/>
            <person name="Pitluck S."/>
            <person name="Brettin T."/>
            <person name="Bruce D."/>
            <person name="Han C."/>
            <person name="Tapia R."/>
            <person name="Goodwin L."/>
            <person name="Thompson L.S."/>
            <person name="Gilna P."/>
            <person name="Schmutz J."/>
            <person name="Larimer F."/>
            <person name="Land M."/>
            <person name="Hauser L."/>
            <person name="Kyrpides N."/>
            <person name="Kim E."/>
            <person name="Belas R."/>
            <person name="Moran M.A."/>
            <person name="Buchan A."/>
            <person name="Gonzalez J.M."/>
            <person name="Schell M.A."/>
            <person name="Sun F."/>
            <person name="Richardson P."/>
        </authorList>
    </citation>
    <scope>NUCLEOTIDE SEQUENCE [LARGE SCALE GENOMIC DNA]</scope>
    <source>
        <strain>TM1040</strain>
    </source>
</reference>
<name>PURQ_RUEST</name>
<evidence type="ECO:0000255" key="1">
    <source>
        <dbReference type="HAMAP-Rule" id="MF_00421"/>
    </source>
</evidence>
<keyword id="KW-0067">ATP-binding</keyword>
<keyword id="KW-0963">Cytoplasm</keyword>
<keyword id="KW-0315">Glutamine amidotransferase</keyword>
<keyword id="KW-0378">Hydrolase</keyword>
<keyword id="KW-0436">Ligase</keyword>
<keyword id="KW-0547">Nucleotide-binding</keyword>
<keyword id="KW-0658">Purine biosynthesis</keyword>
<keyword id="KW-1185">Reference proteome</keyword>
<proteinExistence type="inferred from homology"/>
<dbReference type="EC" id="6.3.5.3" evidence="1"/>
<dbReference type="EC" id="3.5.1.2" evidence="1"/>
<dbReference type="EMBL" id="CP000377">
    <property type="protein sequence ID" value="ABF64196.1"/>
    <property type="molecule type" value="Genomic_DNA"/>
</dbReference>
<dbReference type="RefSeq" id="WP_011538799.1">
    <property type="nucleotide sequence ID" value="NC_008044.1"/>
</dbReference>
<dbReference type="SMR" id="Q1GGM0"/>
<dbReference type="STRING" id="292414.TM1040_1463"/>
<dbReference type="KEGG" id="sit:TM1040_1463"/>
<dbReference type="eggNOG" id="COG0047">
    <property type="taxonomic scope" value="Bacteria"/>
</dbReference>
<dbReference type="HOGENOM" id="CLU_001031_3_1_5"/>
<dbReference type="OrthoDB" id="9804441at2"/>
<dbReference type="UniPathway" id="UPA00074">
    <property type="reaction ID" value="UER00128"/>
</dbReference>
<dbReference type="Proteomes" id="UP000000636">
    <property type="component" value="Chromosome"/>
</dbReference>
<dbReference type="GO" id="GO:0005737">
    <property type="term" value="C:cytoplasm"/>
    <property type="evidence" value="ECO:0007669"/>
    <property type="project" value="UniProtKB-SubCell"/>
</dbReference>
<dbReference type="GO" id="GO:0005524">
    <property type="term" value="F:ATP binding"/>
    <property type="evidence" value="ECO:0007669"/>
    <property type="project" value="UniProtKB-KW"/>
</dbReference>
<dbReference type="GO" id="GO:0004359">
    <property type="term" value="F:glutaminase activity"/>
    <property type="evidence" value="ECO:0007669"/>
    <property type="project" value="UniProtKB-EC"/>
</dbReference>
<dbReference type="GO" id="GO:0004642">
    <property type="term" value="F:phosphoribosylformylglycinamidine synthase activity"/>
    <property type="evidence" value="ECO:0007669"/>
    <property type="project" value="UniProtKB-UniRule"/>
</dbReference>
<dbReference type="GO" id="GO:0006189">
    <property type="term" value="P:'de novo' IMP biosynthetic process"/>
    <property type="evidence" value="ECO:0007669"/>
    <property type="project" value="UniProtKB-UniRule"/>
</dbReference>
<dbReference type="CDD" id="cd01740">
    <property type="entry name" value="GATase1_FGAR_AT"/>
    <property type="match status" value="1"/>
</dbReference>
<dbReference type="Gene3D" id="3.40.50.880">
    <property type="match status" value="1"/>
</dbReference>
<dbReference type="HAMAP" id="MF_00421">
    <property type="entry name" value="PurQ"/>
    <property type="match status" value="1"/>
</dbReference>
<dbReference type="InterPro" id="IPR029062">
    <property type="entry name" value="Class_I_gatase-like"/>
</dbReference>
<dbReference type="InterPro" id="IPR010075">
    <property type="entry name" value="PRibForGlyAmidine_synth_PurQ"/>
</dbReference>
<dbReference type="NCBIfam" id="TIGR01737">
    <property type="entry name" value="FGAM_synth_I"/>
    <property type="match status" value="1"/>
</dbReference>
<dbReference type="NCBIfam" id="NF002957">
    <property type="entry name" value="PRK03619.1"/>
    <property type="match status" value="1"/>
</dbReference>
<dbReference type="PANTHER" id="PTHR47552">
    <property type="entry name" value="PHOSPHORIBOSYLFORMYLGLYCINAMIDINE SYNTHASE SUBUNIT PURQ"/>
    <property type="match status" value="1"/>
</dbReference>
<dbReference type="PANTHER" id="PTHR47552:SF1">
    <property type="entry name" value="PHOSPHORIBOSYLFORMYLGLYCINAMIDINE SYNTHASE SUBUNIT PURQ"/>
    <property type="match status" value="1"/>
</dbReference>
<dbReference type="Pfam" id="PF13507">
    <property type="entry name" value="GATase_5"/>
    <property type="match status" value="1"/>
</dbReference>
<dbReference type="PIRSF" id="PIRSF001586">
    <property type="entry name" value="FGAM_synth_I"/>
    <property type="match status" value="1"/>
</dbReference>
<dbReference type="SMART" id="SM01211">
    <property type="entry name" value="GATase_5"/>
    <property type="match status" value="1"/>
</dbReference>
<dbReference type="SUPFAM" id="SSF52317">
    <property type="entry name" value="Class I glutamine amidotransferase-like"/>
    <property type="match status" value="1"/>
</dbReference>
<dbReference type="PROSITE" id="PS51273">
    <property type="entry name" value="GATASE_TYPE_1"/>
    <property type="match status" value="1"/>
</dbReference>
<accession>Q1GGM0</accession>
<gene>
    <name evidence="1" type="primary">purQ</name>
    <name type="ordered locus">TM1040_1463</name>
</gene>
<sequence length="222" mass="23254">MKAAVVVFPGSNCDRDLAVAFEQAGFDVSMVWHKDSELPEGVDIVGVPGGFSYGDYLRCGAIAAQSPICKAVVAHAERGGYALGVCNGFQILTETGVLPGALLRNAGLKYICKTVDLAVATSDSAFTQGYNAGDVIGVPIAHHDGNYYADDATVQMLKDQDRVAFTYVDNPNGSVADIAGILSENRRVLGMMPHPERAADEGHGGTDGVAMFRALSGLLTDA</sequence>
<comment type="function">
    <text evidence="1">Part of the phosphoribosylformylglycinamidine synthase complex involved in the purines biosynthetic pathway. Catalyzes the ATP-dependent conversion of formylglycinamide ribonucleotide (FGAR) and glutamine to yield formylglycinamidine ribonucleotide (FGAM) and glutamate. The FGAM synthase complex is composed of three subunits. PurQ produces an ammonia molecule by converting glutamine to glutamate. PurL transfers the ammonia molecule to FGAR to form FGAM in an ATP-dependent manner. PurS interacts with PurQ and PurL and is thought to assist in the transfer of the ammonia molecule from PurQ to PurL.</text>
</comment>
<comment type="catalytic activity">
    <reaction evidence="1">
        <text>N(2)-formyl-N(1)-(5-phospho-beta-D-ribosyl)glycinamide + L-glutamine + ATP + H2O = 2-formamido-N(1)-(5-O-phospho-beta-D-ribosyl)acetamidine + L-glutamate + ADP + phosphate + H(+)</text>
        <dbReference type="Rhea" id="RHEA:17129"/>
        <dbReference type="ChEBI" id="CHEBI:15377"/>
        <dbReference type="ChEBI" id="CHEBI:15378"/>
        <dbReference type="ChEBI" id="CHEBI:29985"/>
        <dbReference type="ChEBI" id="CHEBI:30616"/>
        <dbReference type="ChEBI" id="CHEBI:43474"/>
        <dbReference type="ChEBI" id="CHEBI:58359"/>
        <dbReference type="ChEBI" id="CHEBI:147286"/>
        <dbReference type="ChEBI" id="CHEBI:147287"/>
        <dbReference type="ChEBI" id="CHEBI:456216"/>
        <dbReference type="EC" id="6.3.5.3"/>
    </reaction>
</comment>
<comment type="catalytic activity">
    <reaction evidence="1">
        <text>L-glutamine + H2O = L-glutamate + NH4(+)</text>
        <dbReference type="Rhea" id="RHEA:15889"/>
        <dbReference type="ChEBI" id="CHEBI:15377"/>
        <dbReference type="ChEBI" id="CHEBI:28938"/>
        <dbReference type="ChEBI" id="CHEBI:29985"/>
        <dbReference type="ChEBI" id="CHEBI:58359"/>
        <dbReference type="EC" id="3.5.1.2"/>
    </reaction>
</comment>
<comment type="pathway">
    <text evidence="1">Purine metabolism; IMP biosynthesis via de novo pathway; 5-amino-1-(5-phospho-D-ribosyl)imidazole from N(2)-formyl-N(1)-(5-phospho-D-ribosyl)glycinamide: step 1/2.</text>
</comment>
<comment type="subunit">
    <text evidence="1">Part of the FGAM synthase complex composed of 1 PurL, 1 PurQ and 2 PurS subunits.</text>
</comment>
<comment type="subcellular location">
    <subcellularLocation>
        <location evidence="1">Cytoplasm</location>
    </subcellularLocation>
</comment>